<dbReference type="EC" id="1.17.7.3" evidence="1"/>
<dbReference type="EMBL" id="BA000030">
    <property type="protein sequence ID" value="BAC70272.1"/>
    <property type="molecule type" value="Genomic_DNA"/>
</dbReference>
<dbReference type="SMR" id="Q82K43"/>
<dbReference type="GeneID" id="41539648"/>
<dbReference type="KEGG" id="sma:SAVERM_2561"/>
<dbReference type="eggNOG" id="COG0821">
    <property type="taxonomic scope" value="Bacteria"/>
</dbReference>
<dbReference type="HOGENOM" id="CLU_042258_0_0_11"/>
<dbReference type="OrthoDB" id="9803214at2"/>
<dbReference type="UniPathway" id="UPA00056">
    <property type="reaction ID" value="UER00096"/>
</dbReference>
<dbReference type="Proteomes" id="UP000000428">
    <property type="component" value="Chromosome"/>
</dbReference>
<dbReference type="GO" id="GO:0051539">
    <property type="term" value="F:4 iron, 4 sulfur cluster binding"/>
    <property type="evidence" value="ECO:0007669"/>
    <property type="project" value="UniProtKB-UniRule"/>
</dbReference>
<dbReference type="GO" id="GO:0046429">
    <property type="term" value="F:4-hydroxy-3-methylbut-2-en-1-yl diphosphate synthase activity (ferredoxin)"/>
    <property type="evidence" value="ECO:0007669"/>
    <property type="project" value="UniProtKB-UniRule"/>
</dbReference>
<dbReference type="GO" id="GO:0141197">
    <property type="term" value="F:4-hydroxy-3-methylbut-2-enyl-diphosphate synthase activity (flavodoxin)"/>
    <property type="evidence" value="ECO:0007669"/>
    <property type="project" value="UniProtKB-EC"/>
</dbReference>
<dbReference type="GO" id="GO:0005506">
    <property type="term" value="F:iron ion binding"/>
    <property type="evidence" value="ECO:0007669"/>
    <property type="project" value="InterPro"/>
</dbReference>
<dbReference type="GO" id="GO:0019288">
    <property type="term" value="P:isopentenyl diphosphate biosynthetic process, methylerythritol 4-phosphate pathway"/>
    <property type="evidence" value="ECO:0007669"/>
    <property type="project" value="UniProtKB-UniRule"/>
</dbReference>
<dbReference type="GO" id="GO:0016114">
    <property type="term" value="P:terpenoid biosynthetic process"/>
    <property type="evidence" value="ECO:0007669"/>
    <property type="project" value="InterPro"/>
</dbReference>
<dbReference type="FunFam" id="3.20.20.20:FF:000003">
    <property type="entry name" value="4-hydroxy-3-methylbut-2-en-1-yl diphosphate synthase (flavodoxin)"/>
    <property type="match status" value="1"/>
</dbReference>
<dbReference type="FunFam" id="3.30.413.10:FF:000001">
    <property type="entry name" value="4-hydroxy-3-methylbut-2-en-1-yl diphosphate synthase (flavodoxin)"/>
    <property type="match status" value="1"/>
</dbReference>
<dbReference type="Gene3D" id="3.20.20.20">
    <property type="entry name" value="Dihydropteroate synthase-like"/>
    <property type="match status" value="1"/>
</dbReference>
<dbReference type="Gene3D" id="3.30.413.10">
    <property type="entry name" value="Sulfite Reductase Hemoprotein, domain 1"/>
    <property type="match status" value="1"/>
</dbReference>
<dbReference type="HAMAP" id="MF_00159">
    <property type="entry name" value="IspG"/>
    <property type="match status" value="1"/>
</dbReference>
<dbReference type="InterPro" id="IPR011005">
    <property type="entry name" value="Dihydropteroate_synth-like_sf"/>
</dbReference>
<dbReference type="InterPro" id="IPR016425">
    <property type="entry name" value="IspG_bac"/>
</dbReference>
<dbReference type="InterPro" id="IPR004588">
    <property type="entry name" value="IspG_bac-typ"/>
</dbReference>
<dbReference type="InterPro" id="IPR045854">
    <property type="entry name" value="NO2/SO3_Rdtase_4Fe4S_sf"/>
</dbReference>
<dbReference type="NCBIfam" id="TIGR00612">
    <property type="entry name" value="ispG_gcpE"/>
    <property type="match status" value="1"/>
</dbReference>
<dbReference type="NCBIfam" id="NF001540">
    <property type="entry name" value="PRK00366.1"/>
    <property type="match status" value="1"/>
</dbReference>
<dbReference type="PANTHER" id="PTHR30454">
    <property type="entry name" value="4-HYDROXY-3-METHYLBUT-2-EN-1-YL DIPHOSPHATE SYNTHASE"/>
    <property type="match status" value="1"/>
</dbReference>
<dbReference type="PANTHER" id="PTHR30454:SF0">
    <property type="entry name" value="4-HYDROXY-3-METHYLBUT-2-EN-1-YL DIPHOSPHATE SYNTHASE (FERREDOXIN), CHLOROPLASTIC"/>
    <property type="match status" value="1"/>
</dbReference>
<dbReference type="Pfam" id="PF04551">
    <property type="entry name" value="GcpE"/>
    <property type="match status" value="1"/>
</dbReference>
<dbReference type="PIRSF" id="PIRSF004640">
    <property type="entry name" value="IspG"/>
    <property type="match status" value="1"/>
</dbReference>
<dbReference type="SUPFAM" id="SSF51717">
    <property type="entry name" value="Dihydropteroate synthetase-like"/>
    <property type="match status" value="1"/>
</dbReference>
<dbReference type="SUPFAM" id="SSF56014">
    <property type="entry name" value="Nitrite and sulphite reductase 4Fe-4S domain-like"/>
    <property type="match status" value="1"/>
</dbReference>
<comment type="function">
    <text evidence="1">Converts 2C-methyl-D-erythritol 2,4-cyclodiphosphate (ME-2,4cPP) into 1-hydroxy-2-methyl-2-(E)-butenyl 4-diphosphate.</text>
</comment>
<comment type="catalytic activity">
    <reaction evidence="1">
        <text>(2E)-4-hydroxy-3-methylbut-2-enyl diphosphate + oxidized [flavodoxin] + H2O + 2 H(+) = 2-C-methyl-D-erythritol 2,4-cyclic diphosphate + reduced [flavodoxin]</text>
        <dbReference type="Rhea" id="RHEA:43604"/>
        <dbReference type="Rhea" id="RHEA-COMP:10622"/>
        <dbReference type="Rhea" id="RHEA-COMP:10623"/>
        <dbReference type="ChEBI" id="CHEBI:15377"/>
        <dbReference type="ChEBI" id="CHEBI:15378"/>
        <dbReference type="ChEBI" id="CHEBI:57618"/>
        <dbReference type="ChEBI" id="CHEBI:58210"/>
        <dbReference type="ChEBI" id="CHEBI:58483"/>
        <dbReference type="ChEBI" id="CHEBI:128753"/>
        <dbReference type="EC" id="1.17.7.3"/>
    </reaction>
</comment>
<comment type="cofactor">
    <cofactor evidence="1">
        <name>[4Fe-4S] cluster</name>
        <dbReference type="ChEBI" id="CHEBI:49883"/>
    </cofactor>
    <text evidence="1">Binds 1 [4Fe-4S] cluster.</text>
</comment>
<comment type="pathway">
    <text evidence="1">Isoprenoid biosynthesis; isopentenyl diphosphate biosynthesis via DXP pathway; isopentenyl diphosphate from 1-deoxy-D-xylulose 5-phosphate: step 5/6.</text>
</comment>
<comment type="similarity">
    <text evidence="1">Belongs to the IspG family.</text>
</comment>
<accession>Q82K43</accession>
<reference key="1">
    <citation type="journal article" date="2001" name="Proc. Natl. Acad. Sci. U.S.A.">
        <title>Genome sequence of an industrial microorganism Streptomyces avermitilis: deducing the ability of producing secondary metabolites.</title>
        <authorList>
            <person name="Omura S."/>
            <person name="Ikeda H."/>
            <person name="Ishikawa J."/>
            <person name="Hanamoto A."/>
            <person name="Takahashi C."/>
            <person name="Shinose M."/>
            <person name="Takahashi Y."/>
            <person name="Horikawa H."/>
            <person name="Nakazawa H."/>
            <person name="Osonoe T."/>
            <person name="Kikuchi H."/>
            <person name="Shiba T."/>
            <person name="Sakaki Y."/>
            <person name="Hattori M."/>
        </authorList>
    </citation>
    <scope>NUCLEOTIDE SEQUENCE [LARGE SCALE GENOMIC DNA]</scope>
    <source>
        <strain>ATCC 31267 / DSM 46492 / JCM 5070 / NBRC 14893 / NCIMB 12804 / NRRL 8165 / MA-4680</strain>
    </source>
</reference>
<reference key="2">
    <citation type="journal article" date="2003" name="Nat. Biotechnol.">
        <title>Complete genome sequence and comparative analysis of the industrial microorganism Streptomyces avermitilis.</title>
        <authorList>
            <person name="Ikeda H."/>
            <person name="Ishikawa J."/>
            <person name="Hanamoto A."/>
            <person name="Shinose M."/>
            <person name="Kikuchi H."/>
            <person name="Shiba T."/>
            <person name="Sakaki Y."/>
            <person name="Hattori M."/>
            <person name="Omura S."/>
        </authorList>
    </citation>
    <scope>NUCLEOTIDE SEQUENCE [LARGE SCALE GENOMIC DNA]</scope>
    <source>
        <strain>ATCC 31267 / DSM 46492 / JCM 5070 / NBRC 14893 / NCIMB 12804 / NRRL 8165 / MA-4680</strain>
    </source>
</reference>
<keyword id="KW-0004">4Fe-4S</keyword>
<keyword id="KW-0408">Iron</keyword>
<keyword id="KW-0411">Iron-sulfur</keyword>
<keyword id="KW-0414">Isoprene biosynthesis</keyword>
<keyword id="KW-0479">Metal-binding</keyword>
<keyword id="KW-0560">Oxidoreductase</keyword>
<keyword id="KW-1185">Reference proteome</keyword>
<name>ISPG1_STRAW</name>
<protein>
    <recommendedName>
        <fullName evidence="1">4-hydroxy-3-methylbut-2-en-1-yl diphosphate synthase (flavodoxin) 1</fullName>
        <ecNumber evidence="1">1.17.7.3</ecNumber>
    </recommendedName>
    <alternativeName>
        <fullName evidence="1">1-hydroxy-2-methyl-2-(E)-butenyl 4-diphosphate synthase 1</fullName>
    </alternativeName>
</protein>
<gene>
    <name evidence="1" type="primary">ispG1</name>
    <name type="ordered locus">SAV_2561</name>
</gene>
<sequence>MTAISLGMPSVPTKLAERRKSRQIQVGTVAVGGDAPVSVQSMTTTRTSDIGATLQQIAELTASGCQIVRVACPTQDDADALAVIARKSQIPVIADIHFQPKYVFAAIEAGCAAVRVNPGNIKQFDDKVKEIAKAAKEHGTPIRIGVNAGSLDRRLLEKYGKATPEALVESALWEASLFEEHDFRDIKISVKHNDPVVMVNAYRQLAAQCDYPLHLGVTEAGPAFQGTIKSAVAFGALLSEGIGDTIRVSLSAPPVEEIKVGIQILESLNLRQRGLEIVSCPSCGRAQVDVYKLAEEVTAGLEGMEVPLRVAVMGCVVNGPGEAREADLGVASGNGKGQIFVKGEIIKTVPESKIVETLIEEAMKIAEQMEADGIASGEPSVSVAG</sequence>
<organism>
    <name type="scientific">Streptomyces avermitilis (strain ATCC 31267 / DSM 46492 / JCM 5070 / NBRC 14893 / NCIMB 12804 / NRRL 8165 / MA-4680)</name>
    <dbReference type="NCBI Taxonomy" id="227882"/>
    <lineage>
        <taxon>Bacteria</taxon>
        <taxon>Bacillati</taxon>
        <taxon>Actinomycetota</taxon>
        <taxon>Actinomycetes</taxon>
        <taxon>Kitasatosporales</taxon>
        <taxon>Streptomycetaceae</taxon>
        <taxon>Streptomyces</taxon>
    </lineage>
</organism>
<feature type="chain" id="PRO_0000190633" description="4-hydroxy-3-methylbut-2-en-1-yl diphosphate synthase (flavodoxin) 1">
    <location>
        <begin position="1"/>
        <end position="385"/>
    </location>
</feature>
<feature type="binding site" evidence="1">
    <location>
        <position position="280"/>
    </location>
    <ligand>
        <name>[4Fe-4S] cluster</name>
        <dbReference type="ChEBI" id="CHEBI:49883"/>
    </ligand>
</feature>
<feature type="binding site" evidence="1">
    <location>
        <position position="283"/>
    </location>
    <ligand>
        <name>[4Fe-4S] cluster</name>
        <dbReference type="ChEBI" id="CHEBI:49883"/>
    </ligand>
</feature>
<feature type="binding site" evidence="1">
    <location>
        <position position="315"/>
    </location>
    <ligand>
        <name>[4Fe-4S] cluster</name>
        <dbReference type="ChEBI" id="CHEBI:49883"/>
    </ligand>
</feature>
<feature type="binding site" evidence="1">
    <location>
        <position position="322"/>
    </location>
    <ligand>
        <name>[4Fe-4S] cluster</name>
        <dbReference type="ChEBI" id="CHEBI:49883"/>
    </ligand>
</feature>
<proteinExistence type="inferred from homology"/>
<evidence type="ECO:0000255" key="1">
    <source>
        <dbReference type="HAMAP-Rule" id="MF_00159"/>
    </source>
</evidence>